<name>MT799_ARATH</name>
<proteinExistence type="inferred from homology"/>
<comment type="cofactor">
    <cofactor evidence="2">
        <name>Mg(2+)</name>
        <dbReference type="ChEBI" id="CHEBI:18420"/>
    </cofactor>
    <text evidence="2">Binds 1 Mg(2+) ion per subunit.</text>
</comment>
<comment type="subunit">
    <text evidence="2">Homodimer.</text>
</comment>
<comment type="similarity">
    <text evidence="3">Belongs to the methyltransferase superfamily. Type-7 methyltransferase family.</text>
</comment>
<comment type="sequence caution" evidence="3">
    <conflict type="erroneous initiation">
        <sequence resource="EMBL-CDS" id="BAB09044"/>
    </conflict>
    <text>Extended N-terminus.</text>
</comment>
<feature type="chain" id="PRO_0000333027" description="Probable S-adenosylmethionine-dependent methyltransferase At5g37990">
    <location>
        <begin position="1"/>
        <end position="362"/>
    </location>
</feature>
<feature type="binding site" evidence="1">
    <location>
        <position position="19"/>
    </location>
    <ligand>
        <name>S-adenosyl-L-homocysteine</name>
        <dbReference type="ChEBI" id="CHEBI:57856"/>
    </ligand>
</feature>
<feature type="binding site" evidence="1">
    <location>
        <position position="66"/>
    </location>
    <ligand>
        <name>S-adenosyl-L-homocysteine</name>
        <dbReference type="ChEBI" id="CHEBI:57856"/>
    </ligand>
</feature>
<feature type="binding site" evidence="1">
    <location>
        <position position="71"/>
    </location>
    <ligand>
        <name>S-adenosyl-L-homocysteine</name>
        <dbReference type="ChEBI" id="CHEBI:57856"/>
    </ligand>
</feature>
<feature type="binding site" evidence="1">
    <location>
        <position position="107"/>
    </location>
    <ligand>
        <name>S-adenosyl-L-homocysteine</name>
        <dbReference type="ChEBI" id="CHEBI:57856"/>
    </ligand>
</feature>
<feature type="binding site" evidence="1">
    <location>
        <position position="136"/>
    </location>
    <ligand>
        <name>S-adenosyl-L-homocysteine</name>
        <dbReference type="ChEBI" id="CHEBI:57856"/>
    </ligand>
</feature>
<feature type="binding site" evidence="1">
    <location>
        <position position="137"/>
    </location>
    <ligand>
        <name>S-adenosyl-L-homocysteine</name>
        <dbReference type="ChEBI" id="CHEBI:57856"/>
    </ligand>
</feature>
<feature type="binding site" evidence="2">
    <location>
        <position position="175"/>
    </location>
    <ligand>
        <name>Mg(2+)</name>
        <dbReference type="ChEBI" id="CHEBI:18420"/>
    </ligand>
</feature>
<feature type="binding site" evidence="2">
    <location>
        <position position="261"/>
    </location>
    <ligand>
        <name>Mg(2+)</name>
        <dbReference type="ChEBI" id="CHEBI:18420"/>
    </ligand>
</feature>
<feature type="binding site" evidence="2">
    <location>
        <position position="263"/>
    </location>
    <ligand>
        <name>Mg(2+)</name>
        <dbReference type="ChEBI" id="CHEBI:18420"/>
    </ligand>
</feature>
<evidence type="ECO:0000250" key="1">
    <source>
        <dbReference type="UniProtKB" id="B2KPR3"/>
    </source>
</evidence>
<evidence type="ECO:0000250" key="2">
    <source>
        <dbReference type="UniProtKB" id="Q9FLN8"/>
    </source>
</evidence>
<evidence type="ECO:0000305" key="3"/>
<organism>
    <name type="scientific">Arabidopsis thaliana</name>
    <name type="common">Mouse-ear cress</name>
    <dbReference type="NCBI Taxonomy" id="3702"/>
    <lineage>
        <taxon>Eukaryota</taxon>
        <taxon>Viridiplantae</taxon>
        <taxon>Streptophyta</taxon>
        <taxon>Embryophyta</taxon>
        <taxon>Tracheophyta</taxon>
        <taxon>Spermatophyta</taxon>
        <taxon>Magnoliopsida</taxon>
        <taxon>eudicotyledons</taxon>
        <taxon>Gunneridae</taxon>
        <taxon>Pentapetalae</taxon>
        <taxon>rosids</taxon>
        <taxon>malvids</taxon>
        <taxon>Brassicales</taxon>
        <taxon>Brassicaceae</taxon>
        <taxon>Camelineae</taxon>
        <taxon>Arabidopsis</taxon>
    </lineage>
</organism>
<sequence>MPTFPQSFPMNGGDGPHSYIHNSSYQKVAIDGAKEKTSEAILKNLDLELLNRNSDENILRIADFGCSIGPNTFEVVQNIIDTVKQKNLKENNAYIGAPLEFQVCFNDQPNNDFNTLFRTQPISSKQAYLSVGVPGSFHGRVLPKNSLHIGHITYALHWLSTVPQHVCDKKSPALNKSYIQCNNLVEEVTEAYRVQFKKDMGDFLGARAEELVSGGLMILSGQCLPDGVPKALTWQGVVIDMIGDCLMDMAKQGITTKEKIELFSLPIYIPHISEFKAEIERNENFSIETMEKISHPMDYKPLTNDFITSMFRAILNTIIEEHFGDGVVNELFDRFAKKLNKYPIDFKRCKKYVNYFIVLKRK</sequence>
<dbReference type="EC" id="2.1.1.-"/>
<dbReference type="EMBL" id="AB012241">
    <property type="protein sequence ID" value="BAB09044.1"/>
    <property type="status" value="ALT_INIT"/>
    <property type="molecule type" value="Genomic_DNA"/>
</dbReference>
<dbReference type="EMBL" id="CP002688">
    <property type="protein sequence ID" value="AED94255.2"/>
    <property type="molecule type" value="Genomic_DNA"/>
</dbReference>
<dbReference type="RefSeq" id="NP_198615.3">
    <property type="nucleotide sequence ID" value="NM_123158.4"/>
</dbReference>
<dbReference type="SMR" id="Q9FKC8"/>
<dbReference type="FunCoup" id="Q9FKC8">
    <property type="interactions" value="13"/>
</dbReference>
<dbReference type="STRING" id="3702.Q9FKC8"/>
<dbReference type="PaxDb" id="3702-AT5G37990.1"/>
<dbReference type="ProteomicsDB" id="250803"/>
<dbReference type="EnsemblPlants" id="AT5G37990.1">
    <property type="protein sequence ID" value="AT5G37990.1"/>
    <property type="gene ID" value="AT5G37990"/>
</dbReference>
<dbReference type="GeneID" id="833778"/>
<dbReference type="Gramene" id="AT5G37990.1">
    <property type="protein sequence ID" value="AT5G37990.1"/>
    <property type="gene ID" value="AT5G37990"/>
</dbReference>
<dbReference type="KEGG" id="ath:AT5G37990"/>
<dbReference type="Araport" id="AT5G37990"/>
<dbReference type="TAIR" id="AT5G37990">
    <property type="gene designation" value="CIMT1"/>
</dbReference>
<dbReference type="eggNOG" id="ENOG502QUIN">
    <property type="taxonomic scope" value="Eukaryota"/>
</dbReference>
<dbReference type="HOGENOM" id="CLU_019628_1_1_1"/>
<dbReference type="InParanoid" id="Q9FKC8"/>
<dbReference type="OMA" id="SCLFDMA"/>
<dbReference type="PhylomeDB" id="Q9FKC8"/>
<dbReference type="BioCyc" id="ARA:AT5G37990-MONOMER"/>
<dbReference type="PRO" id="PR:Q9FKC8"/>
<dbReference type="Proteomes" id="UP000006548">
    <property type="component" value="Chromosome 5"/>
</dbReference>
<dbReference type="ExpressionAtlas" id="Q9FKC8">
    <property type="expression patterns" value="baseline and differential"/>
</dbReference>
<dbReference type="GO" id="GO:0046872">
    <property type="term" value="F:metal ion binding"/>
    <property type="evidence" value="ECO:0007669"/>
    <property type="project" value="UniProtKB-KW"/>
</dbReference>
<dbReference type="GO" id="GO:0008168">
    <property type="term" value="F:methyltransferase activity"/>
    <property type="evidence" value="ECO:0007669"/>
    <property type="project" value="UniProtKB-KW"/>
</dbReference>
<dbReference type="GO" id="GO:0032259">
    <property type="term" value="P:methylation"/>
    <property type="evidence" value="ECO:0007669"/>
    <property type="project" value="UniProtKB-KW"/>
</dbReference>
<dbReference type="Gene3D" id="1.10.1200.270">
    <property type="entry name" value="Methyltransferase, alpha-helical capping domain"/>
    <property type="match status" value="1"/>
</dbReference>
<dbReference type="Gene3D" id="3.40.50.150">
    <property type="entry name" value="Vaccinia Virus protein VP39"/>
    <property type="match status" value="1"/>
</dbReference>
<dbReference type="InterPro" id="IPR005299">
    <property type="entry name" value="MeTrfase_7"/>
</dbReference>
<dbReference type="InterPro" id="IPR042086">
    <property type="entry name" value="MeTrfase_capping"/>
</dbReference>
<dbReference type="InterPro" id="IPR029063">
    <property type="entry name" value="SAM-dependent_MTases_sf"/>
</dbReference>
<dbReference type="PANTHER" id="PTHR31009">
    <property type="entry name" value="S-ADENOSYL-L-METHIONINE:CARBOXYL METHYLTRANSFERASE FAMILY PROTEIN"/>
    <property type="match status" value="1"/>
</dbReference>
<dbReference type="Pfam" id="PF03492">
    <property type="entry name" value="Methyltransf_7"/>
    <property type="match status" value="1"/>
</dbReference>
<dbReference type="SUPFAM" id="SSF53335">
    <property type="entry name" value="S-adenosyl-L-methionine-dependent methyltransferases"/>
    <property type="match status" value="1"/>
</dbReference>
<accession>Q9FKC8</accession>
<accession>F4K8P6</accession>
<gene>
    <name type="ordered locus">At5g37990</name>
    <name type="ORF">K18L3.150</name>
</gene>
<reference key="1">
    <citation type="journal article" date="1998" name="DNA Res.">
        <title>Structural analysis of Arabidopsis thaliana chromosome 5. VI. Sequence features of the regions of 1,367,185 bp covered by 19 physically assigned P1 and TAC clones.</title>
        <authorList>
            <person name="Kotani H."/>
            <person name="Nakamura Y."/>
            <person name="Sato S."/>
            <person name="Asamizu E."/>
            <person name="Kaneko T."/>
            <person name="Miyajima N."/>
            <person name="Tabata S."/>
        </authorList>
    </citation>
    <scope>NUCLEOTIDE SEQUENCE [LARGE SCALE GENOMIC DNA]</scope>
    <source>
        <strain>cv. Columbia</strain>
    </source>
</reference>
<reference key="2">
    <citation type="journal article" date="2017" name="Plant J.">
        <title>Araport11: a complete reannotation of the Arabidopsis thaliana reference genome.</title>
        <authorList>
            <person name="Cheng C.Y."/>
            <person name="Krishnakumar V."/>
            <person name="Chan A.P."/>
            <person name="Thibaud-Nissen F."/>
            <person name="Schobel S."/>
            <person name="Town C.D."/>
        </authorList>
    </citation>
    <scope>GENOME REANNOTATION</scope>
    <source>
        <strain>cv. Columbia</strain>
    </source>
</reference>
<protein>
    <recommendedName>
        <fullName>Probable S-adenosylmethionine-dependent methyltransferase At5g37990</fullName>
        <ecNumber>2.1.1.-</ecNumber>
    </recommendedName>
</protein>
<keyword id="KW-0460">Magnesium</keyword>
<keyword id="KW-0479">Metal-binding</keyword>
<keyword id="KW-0489">Methyltransferase</keyword>
<keyword id="KW-1185">Reference proteome</keyword>
<keyword id="KW-0949">S-adenosyl-L-methionine</keyword>
<keyword id="KW-0808">Transferase</keyword>